<proteinExistence type="inferred from homology"/>
<protein>
    <recommendedName>
        <fullName evidence="1">Phosphatidylglycerol--prolipoprotein diacylglyceryl transferase</fullName>
        <ecNumber evidence="1">2.5.1.145</ecNumber>
    </recommendedName>
</protein>
<organism>
    <name type="scientific">Ehrlichia ruminantium (strain Welgevonden)</name>
    <dbReference type="NCBI Taxonomy" id="254945"/>
    <lineage>
        <taxon>Bacteria</taxon>
        <taxon>Pseudomonadati</taxon>
        <taxon>Pseudomonadota</taxon>
        <taxon>Alphaproteobacteria</taxon>
        <taxon>Rickettsiales</taxon>
        <taxon>Anaplasmataceae</taxon>
        <taxon>Ehrlichia</taxon>
    </lineage>
</organism>
<gene>
    <name evidence="1" type="primary">lgt</name>
    <name type="ordered locus">Erum8440</name>
    <name type="ordered locus">ERWE_CDS_08950</name>
</gene>
<comment type="function">
    <text evidence="1">Catalyzes the transfer of the diacylglyceryl group from phosphatidylglycerol to the sulfhydryl group of the N-terminal cysteine of a prolipoprotein, the first step in the formation of mature lipoproteins.</text>
</comment>
<comment type="catalytic activity">
    <reaction evidence="1">
        <text>L-cysteinyl-[prolipoprotein] + a 1,2-diacyl-sn-glycero-3-phospho-(1'-sn-glycerol) = an S-1,2-diacyl-sn-glyceryl-L-cysteinyl-[prolipoprotein] + sn-glycerol 1-phosphate + H(+)</text>
        <dbReference type="Rhea" id="RHEA:56712"/>
        <dbReference type="Rhea" id="RHEA-COMP:14679"/>
        <dbReference type="Rhea" id="RHEA-COMP:14680"/>
        <dbReference type="ChEBI" id="CHEBI:15378"/>
        <dbReference type="ChEBI" id="CHEBI:29950"/>
        <dbReference type="ChEBI" id="CHEBI:57685"/>
        <dbReference type="ChEBI" id="CHEBI:64716"/>
        <dbReference type="ChEBI" id="CHEBI:140658"/>
        <dbReference type="EC" id="2.5.1.145"/>
    </reaction>
</comment>
<comment type="pathway">
    <text evidence="1">Protein modification; lipoprotein biosynthesis (diacylglyceryl transfer).</text>
</comment>
<comment type="subcellular location">
    <subcellularLocation>
        <location evidence="1">Cell inner membrane</location>
        <topology evidence="1">Multi-pass membrane protein</topology>
    </subcellularLocation>
</comment>
<comment type="similarity">
    <text evidence="1">Belongs to the Lgt family.</text>
</comment>
<feature type="chain" id="PRO_0000172601" description="Phosphatidylglycerol--prolipoprotein diacylglyceryl transferase">
    <location>
        <begin position="1"/>
        <end position="259"/>
    </location>
</feature>
<feature type="transmembrane region" description="Helical" evidence="1">
    <location>
        <begin position="10"/>
        <end position="30"/>
    </location>
</feature>
<feature type="transmembrane region" description="Helical" evidence="1">
    <location>
        <begin position="50"/>
        <end position="70"/>
    </location>
</feature>
<feature type="transmembrane region" description="Helical" evidence="1">
    <location>
        <begin position="86"/>
        <end position="106"/>
    </location>
</feature>
<feature type="transmembrane region" description="Helical" evidence="1">
    <location>
        <begin position="112"/>
        <end position="132"/>
    </location>
</feature>
<feature type="transmembrane region" description="Helical" evidence="1">
    <location>
        <begin position="169"/>
        <end position="189"/>
    </location>
</feature>
<feature type="transmembrane region" description="Helical" evidence="1">
    <location>
        <begin position="197"/>
        <end position="217"/>
    </location>
</feature>
<feature type="transmembrane region" description="Helical" evidence="1">
    <location>
        <begin position="227"/>
        <end position="247"/>
    </location>
</feature>
<feature type="binding site" evidence="1">
    <location>
        <position position="133"/>
    </location>
    <ligand>
        <name>a 1,2-diacyl-sn-glycero-3-phospho-(1'-sn-glycerol)</name>
        <dbReference type="ChEBI" id="CHEBI:64716"/>
    </ligand>
</feature>
<evidence type="ECO:0000255" key="1">
    <source>
        <dbReference type="HAMAP-Rule" id="MF_01147"/>
    </source>
</evidence>
<sequence>MNIDPVALKIGLLEIRWYSLAYIIGILFAYWYVQKIDKYKVFTPESYKSIISWWVTGMILGGRIGYILFYNLNFYMSFPIEMFKLWKGGMSFHGASLGLFCTMYIFCKKYKIKFLSAIDLCLCAVPVGIFLGRIANFINGELYGKVTNTRFGMIFQNSGDFFYRHPSQLYEAFFEGLLLFVVMNLLFFFTKVKSYQGMLFSIFMIWYGIVRFFIEFVREPDVQVGYILFNWITMGQLLSFIMVILGICILRLSRMSHNI</sequence>
<dbReference type="EC" id="2.5.1.145" evidence="1"/>
<dbReference type="EMBL" id="CR767821">
    <property type="protein sequence ID" value="CAH58579.1"/>
    <property type="molecule type" value="Genomic_DNA"/>
</dbReference>
<dbReference type="EMBL" id="CR925678">
    <property type="protein sequence ID" value="CAI27389.1"/>
    <property type="molecule type" value="Genomic_DNA"/>
</dbReference>
<dbReference type="RefSeq" id="WP_011155523.1">
    <property type="nucleotide sequence ID" value="NC_005295.2"/>
</dbReference>
<dbReference type="SMR" id="P69833"/>
<dbReference type="GeneID" id="33058100"/>
<dbReference type="KEGG" id="eru:Erum8440"/>
<dbReference type="KEGG" id="erw:ERWE_CDS_08950"/>
<dbReference type="eggNOG" id="COG0682">
    <property type="taxonomic scope" value="Bacteria"/>
</dbReference>
<dbReference type="HOGENOM" id="CLU_013386_1_0_5"/>
<dbReference type="UniPathway" id="UPA00664"/>
<dbReference type="Proteomes" id="UP000001021">
    <property type="component" value="Chromosome"/>
</dbReference>
<dbReference type="GO" id="GO:0005886">
    <property type="term" value="C:plasma membrane"/>
    <property type="evidence" value="ECO:0007669"/>
    <property type="project" value="UniProtKB-SubCell"/>
</dbReference>
<dbReference type="GO" id="GO:0008961">
    <property type="term" value="F:phosphatidylglycerol-prolipoprotein diacylglyceryl transferase activity"/>
    <property type="evidence" value="ECO:0007669"/>
    <property type="project" value="UniProtKB-UniRule"/>
</dbReference>
<dbReference type="GO" id="GO:0042158">
    <property type="term" value="P:lipoprotein biosynthetic process"/>
    <property type="evidence" value="ECO:0007669"/>
    <property type="project" value="UniProtKB-UniRule"/>
</dbReference>
<dbReference type="HAMAP" id="MF_01147">
    <property type="entry name" value="Lgt"/>
    <property type="match status" value="1"/>
</dbReference>
<dbReference type="InterPro" id="IPR001640">
    <property type="entry name" value="Lgt"/>
</dbReference>
<dbReference type="NCBIfam" id="TIGR00544">
    <property type="entry name" value="lgt"/>
    <property type="match status" value="1"/>
</dbReference>
<dbReference type="PANTHER" id="PTHR30589:SF0">
    <property type="entry name" value="PHOSPHATIDYLGLYCEROL--PROLIPOPROTEIN DIACYLGLYCERYL TRANSFERASE"/>
    <property type="match status" value="1"/>
</dbReference>
<dbReference type="PANTHER" id="PTHR30589">
    <property type="entry name" value="PROLIPOPROTEIN DIACYLGLYCERYL TRANSFERASE"/>
    <property type="match status" value="1"/>
</dbReference>
<dbReference type="Pfam" id="PF01790">
    <property type="entry name" value="LGT"/>
    <property type="match status" value="1"/>
</dbReference>
<dbReference type="PROSITE" id="PS01311">
    <property type="entry name" value="LGT"/>
    <property type="match status" value="1"/>
</dbReference>
<accession>P69833</accession>
<accession>Q5FDV9</accession>
<accession>Q5HA37</accession>
<reference key="1">
    <citation type="journal article" date="2005" name="Proc. Natl. Acad. Sci. U.S.A.">
        <title>The genome of the heartwater agent Ehrlichia ruminantium contains multiple tandem repeats of actively variable copy number.</title>
        <authorList>
            <person name="Collins N.E."/>
            <person name="Liebenberg J."/>
            <person name="de Villiers E.P."/>
            <person name="Brayton K.A."/>
            <person name="Louw E."/>
            <person name="Pretorius A."/>
            <person name="Faber F.E."/>
            <person name="van Heerden H."/>
            <person name="Josemans A."/>
            <person name="van Kleef M."/>
            <person name="Steyn H.C."/>
            <person name="van Strijp M.F."/>
            <person name="Zweygarth E."/>
            <person name="Jongejan F."/>
            <person name="Maillard J.C."/>
            <person name="Berthier D."/>
            <person name="Botha M."/>
            <person name="Joubert F."/>
            <person name="Corton C.H."/>
            <person name="Thomson N.R."/>
            <person name="Allsopp M.T."/>
            <person name="Allsopp B.A."/>
        </authorList>
    </citation>
    <scope>NUCLEOTIDE SEQUENCE [LARGE SCALE GENOMIC DNA]</scope>
    <source>
        <strain>Welgevonden</strain>
    </source>
</reference>
<reference key="2">
    <citation type="journal article" date="2006" name="J. Bacteriol.">
        <title>Comparative genomic analysis of three strains of Ehrlichia ruminantium reveals an active process of genome size plasticity.</title>
        <authorList>
            <person name="Frutos R."/>
            <person name="Viari A."/>
            <person name="Ferraz C."/>
            <person name="Morgat A."/>
            <person name="Eychenie S."/>
            <person name="Kandassamy Y."/>
            <person name="Chantal I."/>
            <person name="Bensaid A."/>
            <person name="Coissac E."/>
            <person name="Vachiery N."/>
            <person name="Demaille J."/>
            <person name="Martinez D."/>
        </authorList>
    </citation>
    <scope>NUCLEOTIDE SEQUENCE [LARGE SCALE GENOMIC DNA]</scope>
    <source>
        <strain>Welgevonden</strain>
    </source>
</reference>
<name>LGT_EHRRW</name>
<keyword id="KW-0997">Cell inner membrane</keyword>
<keyword id="KW-1003">Cell membrane</keyword>
<keyword id="KW-0472">Membrane</keyword>
<keyword id="KW-0808">Transferase</keyword>
<keyword id="KW-0812">Transmembrane</keyword>
<keyword id="KW-1133">Transmembrane helix</keyword>